<sequence>MLQPSAQGSYSKAVLSTFRSLEDLTCDGSKIILDGQSLNVSSVVAAACHQVPASISKDPQLHARLRESVELLARKLAEGEIVYGVNTGFGGSADTRTDDYSTLQQALVQHQASGVLLPTDRSSSRPSSRYPHGLRSHSMPTAVVKAAMLVRCNSLLRGHSAVRPEVIEHILAFLRSGLIPVVPVRGSISASGDLSPLSYIANALEGNPDIAIQNEATGDVIRADEALQQLGLAPLRFGPKEGLGLLNGTAFSAGAASLVLFEANQLVLLSQVLTAMGTEALAGSTGNYHPFIAGVRPHRGQIEAAGNIFHFLRDSRMATSPGADGASHSSSLAQDRYALRTASQWIGPQIEDMSLASEQVHCELNSTTDNPLLDPGSGHMHHGGNFQATSITSAMEKTMSAMQMLGRMIFSQCTELINPALNNGLPPNLSFDDPSLSFTMKGIDINMSAYMAELSYLNHHVSNHVQSAEMHNQGLNSLALVASRYAAETVEVLSLMASAYLYALCQALDLRACHLEFLRNARSTVDSLTAELCLSFSPLLSESDQRQIQDSTWEQLLHHWNRSSTSDLHDRSRNAASHTMGALVELLPMQLNEATALPTRLAPQQQWLDEVSATLAGSYDATRAKFQSNPTTPFYLCSASRRMYEFVRKGLGVPLHRGIVDHPTYPSVTEEHAGQELIGSQVSKIYMALRGGVFRDVLQDCWYSSDSVRGFAGEELVLASKL</sequence>
<gene>
    <name evidence="6" type="primary">lenB</name>
    <name type="ORF">ALT_0153</name>
</gene>
<evidence type="ECO:0000250" key="1">
    <source>
        <dbReference type="UniProtKB" id="P11544"/>
    </source>
</evidence>
<evidence type="ECO:0000250" key="2">
    <source>
        <dbReference type="UniProtKB" id="Q68G84"/>
    </source>
</evidence>
<evidence type="ECO:0000255" key="3">
    <source>
        <dbReference type="PROSITE-ProRule" id="PRU10122"/>
    </source>
</evidence>
<evidence type="ECO:0000256" key="4">
    <source>
        <dbReference type="SAM" id="MobiDB-lite"/>
    </source>
</evidence>
<evidence type="ECO:0000269" key="5">
    <source>
    </source>
</evidence>
<evidence type="ECO:0000303" key="6">
    <source>
    </source>
</evidence>
<evidence type="ECO:0000305" key="7"/>
<evidence type="ECO:0000305" key="8">
    <source>
    </source>
</evidence>
<dbReference type="EC" id="4.3.1.24" evidence="8"/>
<dbReference type="EMBL" id="BCLY01000001">
    <property type="protein sequence ID" value="GAQ02832.1"/>
    <property type="molecule type" value="Genomic_DNA"/>
</dbReference>
<dbReference type="Proteomes" id="UP000051487">
    <property type="component" value="Unassembled WGS sequence"/>
</dbReference>
<dbReference type="GO" id="GO:0005737">
    <property type="term" value="C:cytoplasm"/>
    <property type="evidence" value="ECO:0007669"/>
    <property type="project" value="InterPro"/>
</dbReference>
<dbReference type="GO" id="GO:0016841">
    <property type="term" value="F:ammonia-lyase activity"/>
    <property type="evidence" value="ECO:0007669"/>
    <property type="project" value="InterPro"/>
</dbReference>
<dbReference type="GO" id="GO:0006559">
    <property type="term" value="P:L-phenylalanine catabolic process"/>
    <property type="evidence" value="ECO:0007669"/>
    <property type="project" value="InterPro"/>
</dbReference>
<dbReference type="CDD" id="cd00332">
    <property type="entry name" value="PAL-HAL"/>
    <property type="match status" value="1"/>
</dbReference>
<dbReference type="Gene3D" id="1.20.200.10">
    <property type="entry name" value="Fumarase/aspartase (Central domain)"/>
    <property type="match status" value="1"/>
</dbReference>
<dbReference type="Gene3D" id="1.10.275.10">
    <property type="entry name" value="Fumarase/aspartase (N-terminal domain)"/>
    <property type="match status" value="1"/>
</dbReference>
<dbReference type="Gene3D" id="1.10.274.20">
    <property type="entry name" value="Phenylalanine ammonia-lyase 1, domain 3"/>
    <property type="match status" value="1"/>
</dbReference>
<dbReference type="InterPro" id="IPR001106">
    <property type="entry name" value="Aromatic_Lyase"/>
</dbReference>
<dbReference type="InterPro" id="IPR024083">
    <property type="entry name" value="Fumarase/histidase_N"/>
</dbReference>
<dbReference type="InterPro" id="IPR008948">
    <property type="entry name" value="L-Aspartase-like"/>
</dbReference>
<dbReference type="InterPro" id="IPR022313">
    <property type="entry name" value="Phe/His_NH3-lyase_AS"/>
</dbReference>
<dbReference type="InterPro" id="IPR005922">
    <property type="entry name" value="Phe_NH3-lyase"/>
</dbReference>
<dbReference type="InterPro" id="IPR023144">
    <property type="entry name" value="Phe_NH3-lyase_shielding_dom_sf"/>
</dbReference>
<dbReference type="NCBIfam" id="TIGR01226">
    <property type="entry name" value="phe_am_lyase"/>
    <property type="match status" value="1"/>
</dbReference>
<dbReference type="PANTHER" id="PTHR10362">
    <property type="entry name" value="HISTIDINE AMMONIA-LYASE"/>
    <property type="match status" value="1"/>
</dbReference>
<dbReference type="Pfam" id="PF00221">
    <property type="entry name" value="Lyase_aromatic"/>
    <property type="match status" value="1"/>
</dbReference>
<dbReference type="SUPFAM" id="SSF48557">
    <property type="entry name" value="L-aspartase-like"/>
    <property type="match status" value="1"/>
</dbReference>
<dbReference type="PROSITE" id="PS00488">
    <property type="entry name" value="PAL_HISTIDASE"/>
    <property type="match status" value="1"/>
</dbReference>
<reference key="1">
    <citation type="journal article" date="2016" name="Genome Announc.">
        <title>Draft Genome Sequence of the Pathogenic Filamentous Fungus Aspergillus lentulus IFM 54703T.</title>
        <authorList>
            <person name="Kusuya Y."/>
            <person name="Sakai K."/>
            <person name="Kamei K."/>
            <person name="Takahashi H."/>
            <person name="Yaguchi T."/>
        </authorList>
    </citation>
    <scope>NUCLEOTIDE SEQUENCE [LARGE SCALE GENOMIC DNA]</scope>
    <source>
        <strain>IFM 54703</strain>
    </source>
</reference>
<reference key="2">
    <citation type="journal article" date="2022" name="J. Am. Chem. Soc.">
        <title>Alkaloid Biosynthetic Enzyme Generates Diastereomeric Pair via Two Distinct Mechanisms.</title>
        <authorList>
            <person name="Kishimoto S."/>
            <person name="Matsubara Y."/>
            <person name="Watanabe K."/>
        </authorList>
    </citation>
    <scope>FUNCTION</scope>
    <scope>DISRUPTION PHENOTYPE</scope>
    <scope>PATHWAY</scope>
</reference>
<proteinExistence type="inferred from homology"/>
<keyword id="KW-0017">Alkaloid metabolism</keyword>
<keyword id="KW-0456">Lyase</keyword>
<accession>A0AAN4PAE6</accession>
<feature type="chain" id="PRO_0000462093" description="Phenylalanine ammonia-lyase lenB">
    <location>
        <begin position="1"/>
        <end position="722"/>
    </location>
</feature>
<feature type="region of interest" description="Disordered" evidence="4">
    <location>
        <begin position="117"/>
        <end position="136"/>
    </location>
</feature>
<feature type="active site" description="Proton donor/acceptor" evidence="2">
    <location>
        <position position="83"/>
    </location>
</feature>
<feature type="binding site" evidence="2">
    <location>
        <position position="247"/>
    </location>
    <ligand>
        <name>(E)-cinnamate</name>
        <dbReference type="ChEBI" id="CHEBI:15669"/>
    </ligand>
</feature>
<feature type="binding site" evidence="2">
    <location>
        <position position="334"/>
    </location>
    <ligand>
        <name>(E)-cinnamate</name>
        <dbReference type="ChEBI" id="CHEBI:15669"/>
    </ligand>
</feature>
<feature type="binding site" evidence="2">
    <location>
        <position position="340"/>
    </location>
    <ligand>
        <name>(E)-cinnamate</name>
        <dbReference type="ChEBI" id="CHEBI:15669"/>
    </ligand>
</feature>
<feature type="binding site" evidence="2">
    <location>
        <position position="370"/>
    </location>
    <ligand>
        <name>(E)-cinnamate</name>
        <dbReference type="ChEBI" id="CHEBI:15669"/>
    </ligand>
</feature>
<feature type="binding site" evidence="1">
    <location>
        <position position="441"/>
    </location>
    <ligand>
        <name>(E)-cinnamate</name>
        <dbReference type="ChEBI" id="CHEBI:15669"/>
    </ligand>
</feature>
<feature type="binding site" evidence="1">
    <location>
        <position position="469"/>
    </location>
    <ligand>
        <name>(E)-cinnamate</name>
        <dbReference type="ChEBI" id="CHEBI:15669"/>
    </ligand>
</feature>
<feature type="binding site" evidence="2">
    <location>
        <position position="472"/>
    </location>
    <ligand>
        <name>(E)-cinnamate</name>
        <dbReference type="ChEBI" id="CHEBI:15669"/>
    </ligand>
</feature>
<feature type="modified residue" description="2,3-didehydroalanine (Ser)" evidence="3">
    <location>
        <position position="191"/>
    </location>
</feature>
<feature type="cross-link" description="5-imidazolinone (Ala-Gly)" evidence="2">
    <location>
        <begin position="190"/>
        <end position="192"/>
    </location>
</feature>
<protein>
    <recommendedName>
        <fullName evidence="6">Phenylalanine ammonia-lyase lenB</fullName>
        <shortName evidence="6">PAL</shortName>
        <ecNumber evidence="8">4.3.1.24</ecNumber>
    </recommendedName>
    <alternativeName>
        <fullName evidence="6">Lentopeptin biosynthesis cluster protein BA</fullName>
    </alternativeName>
</protein>
<name>LENB_ASPLE</name>
<organism>
    <name type="scientific">Aspergillus lentulus</name>
    <dbReference type="NCBI Taxonomy" id="293939"/>
    <lineage>
        <taxon>Eukaryota</taxon>
        <taxon>Fungi</taxon>
        <taxon>Dikarya</taxon>
        <taxon>Ascomycota</taxon>
        <taxon>Pezizomycotina</taxon>
        <taxon>Eurotiomycetes</taxon>
        <taxon>Eurotiomycetidae</taxon>
        <taxon>Eurotiales</taxon>
        <taxon>Aspergillaceae</taxon>
        <taxon>Aspergillus</taxon>
        <taxon>Aspergillus subgen. Fumigati</taxon>
    </lineage>
</organism>
<comment type="function">
    <text evidence="5">Phenylalanine ammonia-lyase; part of the gene cluster that mediates the biosynthesis of the ergot alkaloids lentopeptins A and B (PubMed:35302734). Within the pathway, lenB provides the cinnamic acid starter unit for the synthesis of the N-acyldiketopiperazine intermediate by the NRPS lenA (PubMed:35302734). Cinnamic acid is condensed with the Ala-Val-Ala peptide chain by lenA which leads to the N-acyldiketopiperazine intermediate which in turn is converted into lentopeptins A and B by the cytochrome P450 monooxygenase lenC (PubMed:35302734).</text>
</comment>
<comment type="catalytic activity">
    <reaction evidence="8">
        <text>L-phenylalanine = (E)-cinnamate + NH4(+)</text>
        <dbReference type="Rhea" id="RHEA:21384"/>
        <dbReference type="ChEBI" id="CHEBI:15669"/>
        <dbReference type="ChEBI" id="CHEBI:28938"/>
        <dbReference type="ChEBI" id="CHEBI:58095"/>
        <dbReference type="EC" id="4.3.1.24"/>
    </reaction>
    <physiologicalReaction direction="left-to-right" evidence="8">
        <dbReference type="Rhea" id="RHEA:21385"/>
    </physiologicalReaction>
</comment>
<comment type="pathway">
    <text evidence="8">Alkaloid biosynthesis.</text>
</comment>
<comment type="PTM">
    <text evidence="2">Contains an active site 4-methylidene-imidazol-5-one (MIO), which is formed autocatalytically by cyclization and dehydration of residues Ala-Ser-Gly.</text>
</comment>
<comment type="disruption phenotype">
    <text evidence="5">Abolishes the biosynthesis of lentopeptins A and B.</text>
</comment>
<comment type="similarity">
    <text evidence="7">Belongs to the PAL/histidase family.</text>
</comment>